<keyword id="KW-0030">Aminoacyl-tRNA synthetase</keyword>
<keyword id="KW-0067">ATP-binding</keyword>
<keyword id="KW-0963">Cytoplasm</keyword>
<keyword id="KW-0436">Ligase</keyword>
<keyword id="KW-0547">Nucleotide-binding</keyword>
<keyword id="KW-0648">Protein biosynthesis</keyword>
<evidence type="ECO:0000255" key="1">
    <source>
        <dbReference type="HAMAP-Rule" id="MF_00049"/>
    </source>
</evidence>
<feature type="chain" id="PRO_1000009365" description="Leucine--tRNA ligase">
    <location>
        <begin position="1"/>
        <end position="864"/>
    </location>
</feature>
<feature type="short sequence motif" description="'HIGH' region">
    <location>
        <begin position="40"/>
        <end position="51"/>
    </location>
</feature>
<feature type="short sequence motif" description="'KMSKS' region">
    <location>
        <begin position="636"/>
        <end position="640"/>
    </location>
</feature>
<feature type="binding site" evidence="1">
    <location>
        <position position="639"/>
    </location>
    <ligand>
        <name>ATP</name>
        <dbReference type="ChEBI" id="CHEBI:30616"/>
    </ligand>
</feature>
<dbReference type="EC" id="6.1.1.4" evidence="1"/>
<dbReference type="EMBL" id="CP000348">
    <property type="protein sequence ID" value="ABJ78160.1"/>
    <property type="molecule type" value="Genomic_DNA"/>
</dbReference>
<dbReference type="RefSeq" id="WP_011669510.1">
    <property type="nucleotide sequence ID" value="NC_008508.1"/>
</dbReference>
<dbReference type="SMR" id="Q054T5"/>
<dbReference type="KEGG" id="lbl:LBL_0571"/>
<dbReference type="HOGENOM" id="CLU_004427_0_0_12"/>
<dbReference type="GO" id="GO:0005829">
    <property type="term" value="C:cytosol"/>
    <property type="evidence" value="ECO:0007669"/>
    <property type="project" value="TreeGrafter"/>
</dbReference>
<dbReference type="GO" id="GO:0002161">
    <property type="term" value="F:aminoacyl-tRNA deacylase activity"/>
    <property type="evidence" value="ECO:0007669"/>
    <property type="project" value="InterPro"/>
</dbReference>
<dbReference type="GO" id="GO:0005524">
    <property type="term" value="F:ATP binding"/>
    <property type="evidence" value="ECO:0007669"/>
    <property type="project" value="UniProtKB-UniRule"/>
</dbReference>
<dbReference type="GO" id="GO:0004823">
    <property type="term" value="F:leucine-tRNA ligase activity"/>
    <property type="evidence" value="ECO:0007669"/>
    <property type="project" value="UniProtKB-UniRule"/>
</dbReference>
<dbReference type="GO" id="GO:0006429">
    <property type="term" value="P:leucyl-tRNA aminoacylation"/>
    <property type="evidence" value="ECO:0007669"/>
    <property type="project" value="UniProtKB-UniRule"/>
</dbReference>
<dbReference type="CDD" id="cd07958">
    <property type="entry name" value="Anticodon_Ia_Leu_BEm"/>
    <property type="match status" value="1"/>
</dbReference>
<dbReference type="CDD" id="cd00812">
    <property type="entry name" value="LeuRS_core"/>
    <property type="match status" value="1"/>
</dbReference>
<dbReference type="FunFam" id="1.10.730.10:FF:000012">
    <property type="entry name" value="Leucine--tRNA ligase"/>
    <property type="match status" value="1"/>
</dbReference>
<dbReference type="FunFam" id="3.40.50.620:FF:000056">
    <property type="entry name" value="Leucine--tRNA ligase"/>
    <property type="match status" value="1"/>
</dbReference>
<dbReference type="FunFam" id="3.40.50.620:FF:000060">
    <property type="entry name" value="Leucine--tRNA ligase"/>
    <property type="match status" value="1"/>
</dbReference>
<dbReference type="FunFam" id="1.10.730.10:FF:000011">
    <property type="entry name" value="Leucine--tRNA ligase chloroplastic/mitochondrial"/>
    <property type="match status" value="1"/>
</dbReference>
<dbReference type="Gene3D" id="3.40.50.620">
    <property type="entry name" value="HUPs"/>
    <property type="match status" value="3"/>
</dbReference>
<dbReference type="Gene3D" id="1.10.730.10">
    <property type="entry name" value="Isoleucyl-tRNA Synthetase, Domain 1"/>
    <property type="match status" value="1"/>
</dbReference>
<dbReference type="Gene3D" id="3.90.740.10">
    <property type="entry name" value="Valyl/Leucyl/Isoleucyl-tRNA synthetase, editing domain"/>
    <property type="match status" value="1"/>
</dbReference>
<dbReference type="HAMAP" id="MF_00049_B">
    <property type="entry name" value="Leu_tRNA_synth_B"/>
    <property type="match status" value="1"/>
</dbReference>
<dbReference type="InterPro" id="IPR001412">
    <property type="entry name" value="aa-tRNA-synth_I_CS"/>
</dbReference>
<dbReference type="InterPro" id="IPR002300">
    <property type="entry name" value="aa-tRNA-synth_Ia"/>
</dbReference>
<dbReference type="InterPro" id="IPR002302">
    <property type="entry name" value="Leu-tRNA-ligase"/>
</dbReference>
<dbReference type="InterPro" id="IPR025709">
    <property type="entry name" value="Leu_tRNA-synth_edit"/>
</dbReference>
<dbReference type="InterPro" id="IPR013155">
    <property type="entry name" value="M/V/L/I-tRNA-synth_anticd-bd"/>
</dbReference>
<dbReference type="InterPro" id="IPR014729">
    <property type="entry name" value="Rossmann-like_a/b/a_fold"/>
</dbReference>
<dbReference type="InterPro" id="IPR009080">
    <property type="entry name" value="tRNAsynth_Ia_anticodon-bd"/>
</dbReference>
<dbReference type="InterPro" id="IPR009008">
    <property type="entry name" value="Val/Leu/Ile-tRNA-synth_edit"/>
</dbReference>
<dbReference type="NCBIfam" id="TIGR00396">
    <property type="entry name" value="leuS_bact"/>
    <property type="match status" value="1"/>
</dbReference>
<dbReference type="PANTHER" id="PTHR43740:SF2">
    <property type="entry name" value="LEUCINE--TRNA LIGASE, MITOCHONDRIAL"/>
    <property type="match status" value="1"/>
</dbReference>
<dbReference type="PANTHER" id="PTHR43740">
    <property type="entry name" value="LEUCYL-TRNA SYNTHETASE"/>
    <property type="match status" value="1"/>
</dbReference>
<dbReference type="Pfam" id="PF08264">
    <property type="entry name" value="Anticodon_1"/>
    <property type="match status" value="1"/>
</dbReference>
<dbReference type="Pfam" id="PF00133">
    <property type="entry name" value="tRNA-synt_1"/>
    <property type="match status" value="2"/>
</dbReference>
<dbReference type="Pfam" id="PF13603">
    <property type="entry name" value="tRNA-synt_1_2"/>
    <property type="match status" value="1"/>
</dbReference>
<dbReference type="PRINTS" id="PR00985">
    <property type="entry name" value="TRNASYNTHLEU"/>
</dbReference>
<dbReference type="SUPFAM" id="SSF47323">
    <property type="entry name" value="Anticodon-binding domain of a subclass of class I aminoacyl-tRNA synthetases"/>
    <property type="match status" value="1"/>
</dbReference>
<dbReference type="SUPFAM" id="SSF52374">
    <property type="entry name" value="Nucleotidylyl transferase"/>
    <property type="match status" value="1"/>
</dbReference>
<dbReference type="SUPFAM" id="SSF50677">
    <property type="entry name" value="ValRS/IleRS/LeuRS editing domain"/>
    <property type="match status" value="1"/>
</dbReference>
<dbReference type="PROSITE" id="PS00178">
    <property type="entry name" value="AA_TRNA_LIGASE_I"/>
    <property type="match status" value="1"/>
</dbReference>
<accession>Q054T5</accession>
<protein>
    <recommendedName>
        <fullName evidence="1">Leucine--tRNA ligase</fullName>
        <ecNumber evidence="1">6.1.1.4</ecNumber>
    </recommendedName>
    <alternativeName>
        <fullName evidence="1">Leucyl-tRNA synthetase</fullName>
        <shortName evidence="1">LeuRS</shortName>
    </alternativeName>
</protein>
<sequence length="864" mass="99488">MQYPFQEVESFWQKFWEENKSFQTNIRSSKPKFYCLDMFPYPSGAGLHVGHPEGYTATDILSRFKRMKGFEVLHPMGWDAFGLPAERYAMQTGIHPAITTKNNIDNFRRQIQMIGLSYDWSRELSTTDPDYYKFTQWIFIQLYQSWFNPELKKAESIETLIQRFSNKGSADLDYKPFSAQEWKQFSLVEKEKILSDFRLVYQAEIPVNWCEALGTVLANEEVEEWIDKGYEVVRKPMRQYMMRITAYADRLLEDLKLVQWPSSTLEMQKNWIGKSEGLEITFPFKKPLKSGSDGIRIFTTRPDTIFGVTYMVVAPEHPIVSEITTPEQKQKVEEYQKVSSLKSDLDRMELTKEKTGVFTGSFVLNPANPSKEIPIWISDYVLYGYGTGAIMAVPAHDQRDYEFAKTFGLEILPVIEGEITDVAFDSKTSICIHSSSSEISIDGLDYSSASSKIISWAESKRIGKKKTQFKLRDWLFARQRYWGEPIPLVHYPSGITKPIPESELPLELPPNLEEFKPSGTGESPLALAKEWLQYKDPETGEIGTRETNTMPQWAGSCWYYLRYIDPKNGKLFCDPDLEKKWMPVDLYVGGAEHAVLHLLYSRFWHKFLYDIGVVSTQEPFAKLIHQGLILGEDKRKMSKSLGNVINPDDVIRKYGADSLRLFEMFMGPLEMVKPWSTRGVEGVFRFLNRVWRLFHTGEGESFRLDEIEPTTEELKILHKTIQKVGEDIPNFSFNTAISQLMIFVNEFTPSDRRPKEVLETFILLLAPFAPHIAEELWKRSGNNKSLSTEKFPEADPQYLVESEILIVVQVNGKLRDEFKAPKDVSEADAISIAKNLDKIKGILDGKTIRKEIYVPGKLINLVIG</sequence>
<comment type="catalytic activity">
    <reaction evidence="1">
        <text>tRNA(Leu) + L-leucine + ATP = L-leucyl-tRNA(Leu) + AMP + diphosphate</text>
        <dbReference type="Rhea" id="RHEA:11688"/>
        <dbReference type="Rhea" id="RHEA-COMP:9613"/>
        <dbReference type="Rhea" id="RHEA-COMP:9622"/>
        <dbReference type="ChEBI" id="CHEBI:30616"/>
        <dbReference type="ChEBI" id="CHEBI:33019"/>
        <dbReference type="ChEBI" id="CHEBI:57427"/>
        <dbReference type="ChEBI" id="CHEBI:78442"/>
        <dbReference type="ChEBI" id="CHEBI:78494"/>
        <dbReference type="ChEBI" id="CHEBI:456215"/>
        <dbReference type="EC" id="6.1.1.4"/>
    </reaction>
</comment>
<comment type="subcellular location">
    <subcellularLocation>
        <location evidence="1">Cytoplasm</location>
    </subcellularLocation>
</comment>
<comment type="similarity">
    <text evidence="1">Belongs to the class-I aminoacyl-tRNA synthetase family.</text>
</comment>
<proteinExistence type="inferred from homology"/>
<organism>
    <name type="scientific">Leptospira borgpetersenii serovar Hardjo-bovis (strain L550)</name>
    <dbReference type="NCBI Taxonomy" id="355276"/>
    <lineage>
        <taxon>Bacteria</taxon>
        <taxon>Pseudomonadati</taxon>
        <taxon>Spirochaetota</taxon>
        <taxon>Spirochaetia</taxon>
        <taxon>Leptospirales</taxon>
        <taxon>Leptospiraceae</taxon>
        <taxon>Leptospira</taxon>
    </lineage>
</organism>
<reference key="1">
    <citation type="journal article" date="2006" name="Proc. Natl. Acad. Sci. U.S.A.">
        <title>Genome reduction in Leptospira borgpetersenii reflects limited transmission potential.</title>
        <authorList>
            <person name="Bulach D.M."/>
            <person name="Zuerner R.L."/>
            <person name="Wilson P."/>
            <person name="Seemann T."/>
            <person name="McGrath A."/>
            <person name="Cullen P.A."/>
            <person name="Davis J."/>
            <person name="Johnson M."/>
            <person name="Kuczek E."/>
            <person name="Alt D.P."/>
            <person name="Peterson-Burch B."/>
            <person name="Coppel R.L."/>
            <person name="Rood J.I."/>
            <person name="Davies J.K."/>
            <person name="Adler B."/>
        </authorList>
    </citation>
    <scope>NUCLEOTIDE SEQUENCE [LARGE SCALE GENOMIC DNA]</scope>
    <source>
        <strain>L550</strain>
    </source>
</reference>
<gene>
    <name evidence="1" type="primary">leuS</name>
    <name type="ordered locus">LBL_0571</name>
</gene>
<name>SYL_LEPBL</name>